<proteinExistence type="inferred from homology"/>
<gene>
    <name evidence="1" type="primary">rpmG2</name>
    <name type="ordered locus">SAR1345</name>
</gene>
<protein>
    <recommendedName>
        <fullName evidence="1">Large ribosomal subunit protein bL33B</fullName>
    </recommendedName>
    <alternativeName>
        <fullName evidence="1">50S ribosomal protein L33 2</fullName>
    </alternativeName>
</protein>
<accession>Q6GH71</accession>
<dbReference type="EMBL" id="BX571856">
    <property type="protein sequence ID" value="CAG40344.1"/>
    <property type="molecule type" value="Genomic_DNA"/>
</dbReference>
<dbReference type="SMR" id="Q6GH71"/>
<dbReference type="KEGG" id="sar:SAR1345"/>
<dbReference type="HOGENOM" id="CLU_190949_0_2_9"/>
<dbReference type="Proteomes" id="UP000000596">
    <property type="component" value="Chromosome"/>
</dbReference>
<dbReference type="GO" id="GO:0005737">
    <property type="term" value="C:cytoplasm"/>
    <property type="evidence" value="ECO:0007669"/>
    <property type="project" value="UniProtKB-ARBA"/>
</dbReference>
<dbReference type="GO" id="GO:1990904">
    <property type="term" value="C:ribonucleoprotein complex"/>
    <property type="evidence" value="ECO:0007669"/>
    <property type="project" value="UniProtKB-KW"/>
</dbReference>
<dbReference type="GO" id="GO:0005840">
    <property type="term" value="C:ribosome"/>
    <property type="evidence" value="ECO:0007669"/>
    <property type="project" value="UniProtKB-KW"/>
</dbReference>
<dbReference type="GO" id="GO:0003735">
    <property type="term" value="F:structural constituent of ribosome"/>
    <property type="evidence" value="ECO:0007669"/>
    <property type="project" value="InterPro"/>
</dbReference>
<dbReference type="GO" id="GO:0006412">
    <property type="term" value="P:translation"/>
    <property type="evidence" value="ECO:0007669"/>
    <property type="project" value="UniProtKB-UniRule"/>
</dbReference>
<dbReference type="Gene3D" id="2.20.28.120">
    <property type="entry name" value="Ribosomal protein L33"/>
    <property type="match status" value="1"/>
</dbReference>
<dbReference type="HAMAP" id="MF_00294">
    <property type="entry name" value="Ribosomal_bL33"/>
    <property type="match status" value="1"/>
</dbReference>
<dbReference type="InterPro" id="IPR001705">
    <property type="entry name" value="Ribosomal_bL33"/>
</dbReference>
<dbReference type="InterPro" id="IPR018264">
    <property type="entry name" value="Ribosomal_bL33_CS"/>
</dbReference>
<dbReference type="InterPro" id="IPR038584">
    <property type="entry name" value="Ribosomal_bL33_sf"/>
</dbReference>
<dbReference type="InterPro" id="IPR011332">
    <property type="entry name" value="Ribosomal_zn-bd"/>
</dbReference>
<dbReference type="NCBIfam" id="NF001764">
    <property type="entry name" value="PRK00504.1"/>
    <property type="match status" value="1"/>
</dbReference>
<dbReference type="NCBIfam" id="NF001860">
    <property type="entry name" value="PRK00595.1"/>
    <property type="match status" value="1"/>
</dbReference>
<dbReference type="NCBIfam" id="TIGR01023">
    <property type="entry name" value="rpmG_bact"/>
    <property type="match status" value="1"/>
</dbReference>
<dbReference type="PANTHER" id="PTHR43168">
    <property type="entry name" value="50S RIBOSOMAL PROTEIN L33, CHLOROPLASTIC"/>
    <property type="match status" value="1"/>
</dbReference>
<dbReference type="PANTHER" id="PTHR43168:SF2">
    <property type="entry name" value="LARGE RIBOSOMAL SUBUNIT PROTEIN BL33C"/>
    <property type="match status" value="1"/>
</dbReference>
<dbReference type="Pfam" id="PF00471">
    <property type="entry name" value="Ribosomal_L33"/>
    <property type="match status" value="1"/>
</dbReference>
<dbReference type="SUPFAM" id="SSF57829">
    <property type="entry name" value="Zn-binding ribosomal proteins"/>
    <property type="match status" value="1"/>
</dbReference>
<dbReference type="PROSITE" id="PS00582">
    <property type="entry name" value="RIBOSOMAL_L33"/>
    <property type="match status" value="1"/>
</dbReference>
<sequence>MRVNVTLACTECGDRNYITTKNKRNNPERIEMKKYCPRLNKYTLHRETK</sequence>
<comment type="similarity">
    <text evidence="1">Belongs to the bacterial ribosomal protein bL33 family.</text>
</comment>
<organism>
    <name type="scientific">Staphylococcus aureus (strain MRSA252)</name>
    <dbReference type="NCBI Taxonomy" id="282458"/>
    <lineage>
        <taxon>Bacteria</taxon>
        <taxon>Bacillati</taxon>
        <taxon>Bacillota</taxon>
        <taxon>Bacilli</taxon>
        <taxon>Bacillales</taxon>
        <taxon>Staphylococcaceae</taxon>
        <taxon>Staphylococcus</taxon>
    </lineage>
</organism>
<evidence type="ECO:0000255" key="1">
    <source>
        <dbReference type="HAMAP-Rule" id="MF_00294"/>
    </source>
</evidence>
<feature type="chain" id="PRO_0000170220" description="Large ribosomal subunit protein bL33B">
    <location>
        <begin position="1"/>
        <end position="49"/>
    </location>
</feature>
<keyword id="KW-0687">Ribonucleoprotein</keyword>
<keyword id="KW-0689">Ribosomal protein</keyword>
<name>RL332_STAAR</name>
<reference key="1">
    <citation type="journal article" date="2004" name="Proc. Natl. Acad. Sci. U.S.A.">
        <title>Complete genomes of two clinical Staphylococcus aureus strains: evidence for the rapid evolution of virulence and drug resistance.</title>
        <authorList>
            <person name="Holden M.T.G."/>
            <person name="Feil E.J."/>
            <person name="Lindsay J.A."/>
            <person name="Peacock S.J."/>
            <person name="Day N.P.J."/>
            <person name="Enright M.C."/>
            <person name="Foster T.J."/>
            <person name="Moore C.E."/>
            <person name="Hurst L."/>
            <person name="Atkin R."/>
            <person name="Barron A."/>
            <person name="Bason N."/>
            <person name="Bentley S.D."/>
            <person name="Chillingworth C."/>
            <person name="Chillingworth T."/>
            <person name="Churcher C."/>
            <person name="Clark L."/>
            <person name="Corton C."/>
            <person name="Cronin A."/>
            <person name="Doggett J."/>
            <person name="Dowd L."/>
            <person name="Feltwell T."/>
            <person name="Hance Z."/>
            <person name="Harris B."/>
            <person name="Hauser H."/>
            <person name="Holroyd S."/>
            <person name="Jagels K."/>
            <person name="James K.D."/>
            <person name="Lennard N."/>
            <person name="Line A."/>
            <person name="Mayes R."/>
            <person name="Moule S."/>
            <person name="Mungall K."/>
            <person name="Ormond D."/>
            <person name="Quail M.A."/>
            <person name="Rabbinowitsch E."/>
            <person name="Rutherford K.M."/>
            <person name="Sanders M."/>
            <person name="Sharp S."/>
            <person name="Simmonds M."/>
            <person name="Stevens K."/>
            <person name="Whitehead S."/>
            <person name="Barrell B.G."/>
            <person name="Spratt B.G."/>
            <person name="Parkhill J."/>
        </authorList>
    </citation>
    <scope>NUCLEOTIDE SEQUENCE [LARGE SCALE GENOMIC DNA]</scope>
    <source>
        <strain>MRSA252</strain>
    </source>
</reference>